<comment type="function">
    <text evidence="1">One of the primary rRNA binding proteins, it binds directly to 16S rRNA where it nucleates assembly of the head domain of the 30S subunit. Is located at the subunit interface close to the decoding center, probably blocks exit of the E-site tRNA.</text>
</comment>
<comment type="subunit">
    <text evidence="1">Part of the 30S ribosomal subunit. Contacts proteins S9 and S11.</text>
</comment>
<comment type="similarity">
    <text evidence="1">Belongs to the universal ribosomal protein uS7 family.</text>
</comment>
<protein>
    <recommendedName>
        <fullName evidence="1">Small ribosomal subunit protein uS7</fullName>
    </recommendedName>
    <alternativeName>
        <fullName evidence="2">30S ribosomal protein S7</fullName>
    </alternativeName>
</protein>
<keyword id="KW-1185">Reference proteome</keyword>
<keyword id="KW-0687">Ribonucleoprotein</keyword>
<keyword id="KW-0689">Ribosomal protein</keyword>
<keyword id="KW-0694">RNA-binding</keyword>
<keyword id="KW-0699">rRNA-binding</keyword>
<keyword id="KW-0820">tRNA-binding</keyword>
<organism>
    <name type="scientific">Staphylococcus saprophyticus subsp. saprophyticus (strain ATCC 15305 / DSM 20229 / NCIMB 8711 / NCTC 7292 / S-41)</name>
    <dbReference type="NCBI Taxonomy" id="342451"/>
    <lineage>
        <taxon>Bacteria</taxon>
        <taxon>Bacillati</taxon>
        <taxon>Bacillota</taxon>
        <taxon>Bacilli</taxon>
        <taxon>Bacillales</taxon>
        <taxon>Staphylococcaceae</taxon>
        <taxon>Staphylococcus</taxon>
    </lineage>
</organism>
<feature type="chain" id="PRO_0000226531" description="Small ribosomal subunit protein uS7">
    <location>
        <begin position="1"/>
        <end position="156"/>
    </location>
</feature>
<reference key="1">
    <citation type="journal article" date="2005" name="Proc. Natl. Acad. Sci. U.S.A.">
        <title>Whole genome sequence of Staphylococcus saprophyticus reveals the pathogenesis of uncomplicated urinary tract infection.</title>
        <authorList>
            <person name="Kuroda M."/>
            <person name="Yamashita A."/>
            <person name="Hirakawa H."/>
            <person name="Kumano M."/>
            <person name="Morikawa K."/>
            <person name="Higashide M."/>
            <person name="Maruyama A."/>
            <person name="Inose Y."/>
            <person name="Matoba K."/>
            <person name="Toh H."/>
            <person name="Kuhara S."/>
            <person name="Hattori M."/>
            <person name="Ohta T."/>
        </authorList>
    </citation>
    <scope>NUCLEOTIDE SEQUENCE [LARGE SCALE GENOMIC DNA]</scope>
    <source>
        <strain>ATCC 15305 / DSM 20229 / NCIMB 8711 / NCTC 7292 / S-41</strain>
    </source>
</reference>
<name>RS7_STAS1</name>
<gene>
    <name evidence="1" type="primary">rpsG</name>
    <name type="ordered locus">SSP2209</name>
</gene>
<evidence type="ECO:0000255" key="1">
    <source>
        <dbReference type="HAMAP-Rule" id="MF_00480"/>
    </source>
</evidence>
<evidence type="ECO:0000305" key="2"/>
<accession>Q49V56</accession>
<dbReference type="EMBL" id="AP008934">
    <property type="protein sequence ID" value="BAE19354.1"/>
    <property type="molecule type" value="Genomic_DNA"/>
</dbReference>
<dbReference type="RefSeq" id="WP_002484155.1">
    <property type="nucleotide sequence ID" value="NZ_MTGA01000039.1"/>
</dbReference>
<dbReference type="SMR" id="Q49V56"/>
<dbReference type="GeneID" id="97229006"/>
<dbReference type="KEGG" id="ssp:SSP2209"/>
<dbReference type="eggNOG" id="COG0049">
    <property type="taxonomic scope" value="Bacteria"/>
</dbReference>
<dbReference type="HOGENOM" id="CLU_072226_1_1_9"/>
<dbReference type="OrthoDB" id="9807653at2"/>
<dbReference type="Proteomes" id="UP000006371">
    <property type="component" value="Chromosome"/>
</dbReference>
<dbReference type="GO" id="GO:0015935">
    <property type="term" value="C:small ribosomal subunit"/>
    <property type="evidence" value="ECO:0007669"/>
    <property type="project" value="InterPro"/>
</dbReference>
<dbReference type="GO" id="GO:0019843">
    <property type="term" value="F:rRNA binding"/>
    <property type="evidence" value="ECO:0007669"/>
    <property type="project" value="UniProtKB-UniRule"/>
</dbReference>
<dbReference type="GO" id="GO:0003735">
    <property type="term" value="F:structural constituent of ribosome"/>
    <property type="evidence" value="ECO:0007669"/>
    <property type="project" value="InterPro"/>
</dbReference>
<dbReference type="GO" id="GO:0000049">
    <property type="term" value="F:tRNA binding"/>
    <property type="evidence" value="ECO:0007669"/>
    <property type="project" value="UniProtKB-UniRule"/>
</dbReference>
<dbReference type="GO" id="GO:0006412">
    <property type="term" value="P:translation"/>
    <property type="evidence" value="ECO:0007669"/>
    <property type="project" value="UniProtKB-UniRule"/>
</dbReference>
<dbReference type="CDD" id="cd14869">
    <property type="entry name" value="uS7_Bacteria"/>
    <property type="match status" value="1"/>
</dbReference>
<dbReference type="FunFam" id="1.10.455.10:FF:000001">
    <property type="entry name" value="30S ribosomal protein S7"/>
    <property type="match status" value="1"/>
</dbReference>
<dbReference type="Gene3D" id="1.10.455.10">
    <property type="entry name" value="Ribosomal protein S7 domain"/>
    <property type="match status" value="1"/>
</dbReference>
<dbReference type="HAMAP" id="MF_00480_B">
    <property type="entry name" value="Ribosomal_uS7_B"/>
    <property type="match status" value="1"/>
</dbReference>
<dbReference type="InterPro" id="IPR000235">
    <property type="entry name" value="Ribosomal_uS7"/>
</dbReference>
<dbReference type="InterPro" id="IPR005717">
    <property type="entry name" value="Ribosomal_uS7_bac/org-type"/>
</dbReference>
<dbReference type="InterPro" id="IPR020606">
    <property type="entry name" value="Ribosomal_uS7_CS"/>
</dbReference>
<dbReference type="InterPro" id="IPR023798">
    <property type="entry name" value="Ribosomal_uS7_dom"/>
</dbReference>
<dbReference type="InterPro" id="IPR036823">
    <property type="entry name" value="Ribosomal_uS7_dom_sf"/>
</dbReference>
<dbReference type="NCBIfam" id="TIGR01029">
    <property type="entry name" value="rpsG_bact"/>
    <property type="match status" value="1"/>
</dbReference>
<dbReference type="PANTHER" id="PTHR11205">
    <property type="entry name" value="RIBOSOMAL PROTEIN S7"/>
    <property type="match status" value="1"/>
</dbReference>
<dbReference type="Pfam" id="PF00177">
    <property type="entry name" value="Ribosomal_S7"/>
    <property type="match status" value="1"/>
</dbReference>
<dbReference type="PIRSF" id="PIRSF002122">
    <property type="entry name" value="RPS7p_RPS7a_RPS5e_RPS7o"/>
    <property type="match status" value="1"/>
</dbReference>
<dbReference type="SUPFAM" id="SSF47973">
    <property type="entry name" value="Ribosomal protein S7"/>
    <property type="match status" value="1"/>
</dbReference>
<dbReference type="PROSITE" id="PS00052">
    <property type="entry name" value="RIBOSOMAL_S7"/>
    <property type="match status" value="1"/>
</dbReference>
<proteinExistence type="inferred from homology"/>
<sequence length="156" mass="17826">MPRKGSVPKRDVLPDPIHNSKLVTKLINKIMLDGKRGTAQRILYSAFDLVKERSGREAVEVFEEAIDNIMPVLEVKARRVGGSNYQVPVEVRPERRTTLGLRWLVNYSRLRGEKTMEERLANEILDAANNTGGAVKKREDTHKMAEANKAFAHYRW</sequence>